<organism>
    <name type="scientific">Trichophyton tonsurans</name>
    <name type="common">Scalp ringworm fungus</name>
    <dbReference type="NCBI Taxonomy" id="34387"/>
    <lineage>
        <taxon>Eukaryota</taxon>
        <taxon>Fungi</taxon>
        <taxon>Dikarya</taxon>
        <taxon>Ascomycota</taxon>
        <taxon>Pezizomycotina</taxon>
        <taxon>Eurotiomycetes</taxon>
        <taxon>Eurotiomycetidae</taxon>
        <taxon>Onygenales</taxon>
        <taxon>Arthrodermataceae</taxon>
        <taxon>Trichophyton</taxon>
    </lineage>
</organism>
<evidence type="ECO:0000250" key="1"/>
<evidence type="ECO:0000255" key="2"/>
<evidence type="ECO:0000255" key="3">
    <source>
        <dbReference type="PROSITE-ProRule" id="PRU01240"/>
    </source>
</evidence>
<evidence type="ECO:0000305" key="4"/>
<reference key="1">
    <citation type="submission" date="2008-10" db="EMBL/GenBank/DDBJ databases">
        <title>Comparing putative pathogenicity factors between Trichophyton tonsurans and Trichophyton equinum.</title>
        <authorList>
            <person name="Preuett B.L."/>
            <person name="Abdel-Rahman S.M."/>
        </authorList>
    </citation>
    <scope>NUCLEOTIDE SEQUENCE [GENOMIC DNA]</scope>
</reference>
<feature type="signal peptide" evidence="2">
    <location>
        <begin position="1"/>
        <end position="19"/>
    </location>
</feature>
<feature type="propeptide" id="PRO_0000380782" evidence="1">
    <location>
        <begin position="20"/>
        <end position="116"/>
    </location>
</feature>
<feature type="chain" id="PRO_0000380783" description="Subtilisin-like protease 3">
    <location>
        <begin position="117"/>
        <end position="397"/>
    </location>
</feature>
<feature type="domain" description="Inhibitor I9" evidence="2">
    <location>
        <begin position="35"/>
        <end position="116"/>
    </location>
</feature>
<feature type="domain" description="Peptidase S8" evidence="3">
    <location>
        <begin position="126"/>
        <end position="397"/>
    </location>
</feature>
<feature type="active site" description="Charge relay system" evidence="3">
    <location>
        <position position="158"/>
    </location>
</feature>
<feature type="active site" description="Charge relay system" evidence="3">
    <location>
        <position position="189"/>
    </location>
</feature>
<feature type="active site" description="Charge relay system" evidence="3">
    <location>
        <position position="344"/>
    </location>
</feature>
<feature type="glycosylation site" description="N-linked (GlcNAc...) asparagine" evidence="2">
    <location>
        <position position="250"/>
    </location>
</feature>
<feature type="glycosylation site" description="N-linked (GlcNAc...) asparagine" evidence="2">
    <location>
        <position position="393"/>
    </location>
</feature>
<comment type="function">
    <text evidence="1">Secreted subtilisin-like serine protease with keratinolytic activity that contributes to pathogenicity.</text>
</comment>
<comment type="subcellular location">
    <subcellularLocation>
        <location evidence="1">Secreted</location>
    </subcellularLocation>
</comment>
<comment type="similarity">
    <text evidence="4">Belongs to the peptidase S8 family.</text>
</comment>
<name>SUB3_TRITO</name>
<dbReference type="EC" id="3.4.21.-"/>
<dbReference type="EMBL" id="FJ348238">
    <property type="protein sequence ID" value="ACL37328.1"/>
    <property type="molecule type" value="Genomic_DNA"/>
</dbReference>
<dbReference type="SMR" id="B8XGQ6"/>
<dbReference type="GlyCosmos" id="B8XGQ6">
    <property type="glycosylation" value="2 sites, No reported glycans"/>
</dbReference>
<dbReference type="VEuPathDB" id="FungiDB:TESG_03300"/>
<dbReference type="GO" id="GO:0005576">
    <property type="term" value="C:extracellular region"/>
    <property type="evidence" value="ECO:0007669"/>
    <property type="project" value="UniProtKB-SubCell"/>
</dbReference>
<dbReference type="GO" id="GO:0004252">
    <property type="term" value="F:serine-type endopeptidase activity"/>
    <property type="evidence" value="ECO:0007669"/>
    <property type="project" value="InterPro"/>
</dbReference>
<dbReference type="GO" id="GO:0006508">
    <property type="term" value="P:proteolysis"/>
    <property type="evidence" value="ECO:0007669"/>
    <property type="project" value="UniProtKB-KW"/>
</dbReference>
<dbReference type="CDD" id="cd04077">
    <property type="entry name" value="Peptidases_S8_PCSK9_ProteinaseK_like"/>
    <property type="match status" value="1"/>
</dbReference>
<dbReference type="FunFam" id="3.40.50.200:FF:000014">
    <property type="entry name" value="Proteinase K"/>
    <property type="match status" value="1"/>
</dbReference>
<dbReference type="Gene3D" id="3.30.70.80">
    <property type="entry name" value="Peptidase S8 propeptide/proteinase inhibitor I9"/>
    <property type="match status" value="1"/>
</dbReference>
<dbReference type="Gene3D" id="3.40.50.200">
    <property type="entry name" value="Peptidase S8/S53 domain"/>
    <property type="match status" value="1"/>
</dbReference>
<dbReference type="InterPro" id="IPR034193">
    <property type="entry name" value="PCSK9_ProteinaseK-like"/>
</dbReference>
<dbReference type="InterPro" id="IPR000209">
    <property type="entry name" value="Peptidase_S8/S53_dom"/>
</dbReference>
<dbReference type="InterPro" id="IPR036852">
    <property type="entry name" value="Peptidase_S8/S53_dom_sf"/>
</dbReference>
<dbReference type="InterPro" id="IPR023828">
    <property type="entry name" value="Peptidase_S8_Ser-AS"/>
</dbReference>
<dbReference type="InterPro" id="IPR050131">
    <property type="entry name" value="Peptidase_S8_subtilisin-like"/>
</dbReference>
<dbReference type="InterPro" id="IPR015500">
    <property type="entry name" value="Peptidase_S8_subtilisin-rel"/>
</dbReference>
<dbReference type="InterPro" id="IPR010259">
    <property type="entry name" value="S8pro/Inhibitor_I9"/>
</dbReference>
<dbReference type="InterPro" id="IPR037045">
    <property type="entry name" value="S8pro/Inhibitor_I9_sf"/>
</dbReference>
<dbReference type="PANTHER" id="PTHR43806:SF11">
    <property type="entry name" value="CEREVISIN-RELATED"/>
    <property type="match status" value="1"/>
</dbReference>
<dbReference type="PANTHER" id="PTHR43806">
    <property type="entry name" value="PEPTIDASE S8"/>
    <property type="match status" value="1"/>
</dbReference>
<dbReference type="Pfam" id="PF05922">
    <property type="entry name" value="Inhibitor_I9"/>
    <property type="match status" value="1"/>
</dbReference>
<dbReference type="Pfam" id="PF00082">
    <property type="entry name" value="Peptidase_S8"/>
    <property type="match status" value="1"/>
</dbReference>
<dbReference type="PRINTS" id="PR00723">
    <property type="entry name" value="SUBTILISIN"/>
</dbReference>
<dbReference type="SUPFAM" id="SSF54897">
    <property type="entry name" value="Protease propeptides/inhibitors"/>
    <property type="match status" value="1"/>
</dbReference>
<dbReference type="SUPFAM" id="SSF52743">
    <property type="entry name" value="Subtilisin-like"/>
    <property type="match status" value="1"/>
</dbReference>
<dbReference type="PROSITE" id="PS51892">
    <property type="entry name" value="SUBTILASE"/>
    <property type="match status" value="1"/>
</dbReference>
<dbReference type="PROSITE" id="PS00138">
    <property type="entry name" value="SUBTILASE_SER"/>
    <property type="match status" value="1"/>
</dbReference>
<protein>
    <recommendedName>
        <fullName>Subtilisin-like protease 3</fullName>
        <ecNumber>3.4.21.-</ecNumber>
    </recommendedName>
</protein>
<sequence>MGCIKVISVFLAAIAAVDARAFFHNRGGSDVIPNSYIVVMKDGVTTEDFDSHISTVAATHNLNKAKRGSEAVGHKDSFNINGWRAYNGHFDEATIESILNDDKVNYVEHDRVVKLAALVTQPNAPTWGLGRVSHRAPGNRDFVYDSSAGQGITIYGVDTGIDIRHPEFAGRIRWGTNTVDNDNTDGNGHGTHTAGTFAGTTYGVAKKANIVAVKVLSAGGSGSTAGVIKGIDWCVTDVRSRNALGKAALNLSLGGSFSQANNDAVTRAQEAGIFVAVAAGNDNRDARNYSPASAPAVCTAASSTIDDQKSSFSNWGSIVDIYAPGSSILSAAPGGGTRTLSGTSMASPHVCGVGAAMLAQGVSVAQVCNRLKQIGNAVIRNPGTSTTNRLLYNGSGQ</sequence>
<proteinExistence type="inferred from homology"/>
<gene>
    <name type="primary">SUB3</name>
</gene>
<keyword id="KW-0325">Glycoprotein</keyword>
<keyword id="KW-0378">Hydrolase</keyword>
<keyword id="KW-0645">Protease</keyword>
<keyword id="KW-0964">Secreted</keyword>
<keyword id="KW-0720">Serine protease</keyword>
<keyword id="KW-0732">Signal</keyword>
<keyword id="KW-0843">Virulence</keyword>
<keyword id="KW-0865">Zymogen</keyword>
<accession>B8XGQ6</accession>